<feature type="chain" id="PRO_1000164535" description="Cell division protein SepF">
    <location>
        <begin position="1"/>
        <end position="161"/>
    </location>
</feature>
<proteinExistence type="inferred from homology"/>
<reference key="1">
    <citation type="journal article" date="2008" name="DNA Res.">
        <title>Complete genome sequence of Finegoldia magna, an anaerobic opportunistic pathogen.</title>
        <authorList>
            <person name="Goto T."/>
            <person name="Yamashita A."/>
            <person name="Hirakawa H."/>
            <person name="Matsutani M."/>
            <person name="Todo K."/>
            <person name="Ohshima K."/>
            <person name="Toh H."/>
            <person name="Miyamoto K."/>
            <person name="Kuhara S."/>
            <person name="Hattori M."/>
            <person name="Shimizu T."/>
            <person name="Akimoto S."/>
        </authorList>
    </citation>
    <scope>NUCLEOTIDE SEQUENCE [LARGE SCALE GENOMIC DNA]</scope>
    <source>
        <strain>ATCC 29328 / DSM 20472 / WAL 2508</strain>
    </source>
</reference>
<evidence type="ECO:0000255" key="1">
    <source>
        <dbReference type="HAMAP-Rule" id="MF_01197"/>
    </source>
</evidence>
<keyword id="KW-0131">Cell cycle</keyword>
<keyword id="KW-0132">Cell division</keyword>
<keyword id="KW-0963">Cytoplasm</keyword>
<keyword id="KW-1185">Reference proteome</keyword>
<keyword id="KW-0717">Septation</keyword>
<gene>
    <name evidence="1" type="primary">sepF</name>
    <name type="ordered locus">FMG_0637</name>
</gene>
<organism>
    <name type="scientific">Finegoldia magna (strain ATCC 29328 / DSM 20472 / WAL 2508)</name>
    <name type="common">Peptostreptococcus magnus</name>
    <dbReference type="NCBI Taxonomy" id="334413"/>
    <lineage>
        <taxon>Bacteria</taxon>
        <taxon>Bacillati</taxon>
        <taxon>Bacillota</taxon>
        <taxon>Tissierellia</taxon>
        <taxon>Tissierellales</taxon>
        <taxon>Peptoniphilaceae</taxon>
        <taxon>Finegoldia</taxon>
    </lineage>
</organism>
<name>SEPF_FINM2</name>
<dbReference type="EMBL" id="AP008971">
    <property type="protein sequence ID" value="BAG08055.1"/>
    <property type="molecule type" value="Genomic_DNA"/>
</dbReference>
<dbReference type="RefSeq" id="WP_002838352.1">
    <property type="nucleotide sequence ID" value="NC_010376.1"/>
</dbReference>
<dbReference type="SMR" id="B0S115"/>
<dbReference type="STRING" id="334413.FMG_0637"/>
<dbReference type="KEGG" id="fma:FMG_0637"/>
<dbReference type="eggNOG" id="COG1799">
    <property type="taxonomic scope" value="Bacteria"/>
</dbReference>
<dbReference type="HOGENOM" id="CLU_078499_4_0_9"/>
<dbReference type="Proteomes" id="UP000001319">
    <property type="component" value="Chromosome"/>
</dbReference>
<dbReference type="GO" id="GO:0005737">
    <property type="term" value="C:cytoplasm"/>
    <property type="evidence" value="ECO:0007669"/>
    <property type="project" value="UniProtKB-SubCell"/>
</dbReference>
<dbReference type="GO" id="GO:0000917">
    <property type="term" value="P:division septum assembly"/>
    <property type="evidence" value="ECO:0007669"/>
    <property type="project" value="UniProtKB-KW"/>
</dbReference>
<dbReference type="GO" id="GO:0043093">
    <property type="term" value="P:FtsZ-dependent cytokinesis"/>
    <property type="evidence" value="ECO:0007669"/>
    <property type="project" value="UniProtKB-UniRule"/>
</dbReference>
<dbReference type="Gene3D" id="3.30.110.150">
    <property type="entry name" value="SepF-like protein"/>
    <property type="match status" value="1"/>
</dbReference>
<dbReference type="HAMAP" id="MF_01197">
    <property type="entry name" value="SepF"/>
    <property type="match status" value="1"/>
</dbReference>
<dbReference type="InterPro" id="IPR023052">
    <property type="entry name" value="Cell_div_SepF"/>
</dbReference>
<dbReference type="InterPro" id="IPR007561">
    <property type="entry name" value="Cell_div_SepF/SepF-rel"/>
</dbReference>
<dbReference type="InterPro" id="IPR038594">
    <property type="entry name" value="SepF-like_sf"/>
</dbReference>
<dbReference type="PANTHER" id="PTHR35798">
    <property type="entry name" value="CELL DIVISION PROTEIN SEPF"/>
    <property type="match status" value="1"/>
</dbReference>
<dbReference type="PANTHER" id="PTHR35798:SF1">
    <property type="entry name" value="CELL DIVISION PROTEIN SEPF"/>
    <property type="match status" value="1"/>
</dbReference>
<dbReference type="Pfam" id="PF04472">
    <property type="entry name" value="SepF"/>
    <property type="match status" value="1"/>
</dbReference>
<protein>
    <recommendedName>
        <fullName evidence="1">Cell division protein SepF</fullName>
    </recommendedName>
</protein>
<sequence length="161" mass="18653">MSFMNSFKKLVGVEDDYDEYYDDQYYYDESDHVESESKDYEQKQNYETKSNIVSMNNSATKPVESKPLNRVKINIHEPISFDDAPKVIDVILKNEVAVLNIEMLEKDVKQRIFDFVSGAIYSLDGKMQKVTKDIFVLVPKGVEIDGKIKDQITKNNGFFQL</sequence>
<comment type="function">
    <text evidence="1">Cell division protein that is part of the divisome complex and is recruited early to the Z-ring. Probably stimulates Z-ring formation, perhaps through the cross-linking of FtsZ protofilaments. Its function overlaps with FtsA.</text>
</comment>
<comment type="subunit">
    <text evidence="1">Homodimer. Interacts with FtsZ.</text>
</comment>
<comment type="subcellular location">
    <subcellularLocation>
        <location evidence="1">Cytoplasm</location>
    </subcellularLocation>
    <text evidence="1">Localizes to the division site, in a FtsZ-dependent manner.</text>
</comment>
<comment type="similarity">
    <text evidence="1">Belongs to the SepF family.</text>
</comment>
<accession>B0S115</accession>